<dbReference type="EC" id="6.3.5.3" evidence="1"/>
<dbReference type="EMBL" id="AE008923">
    <property type="protein sequence ID" value="AAM38392.1"/>
    <property type="molecule type" value="Genomic_DNA"/>
</dbReference>
<dbReference type="RefSeq" id="WP_011052353.1">
    <property type="nucleotide sequence ID" value="NC_003919.1"/>
</dbReference>
<dbReference type="SMR" id="Q8PGR7"/>
<dbReference type="GeneID" id="66912584"/>
<dbReference type="KEGG" id="xac:XAC3549"/>
<dbReference type="eggNOG" id="COG0046">
    <property type="taxonomic scope" value="Bacteria"/>
</dbReference>
<dbReference type="eggNOG" id="COG0047">
    <property type="taxonomic scope" value="Bacteria"/>
</dbReference>
<dbReference type="HOGENOM" id="CLU_001031_0_2_6"/>
<dbReference type="UniPathway" id="UPA00074">
    <property type="reaction ID" value="UER00128"/>
</dbReference>
<dbReference type="Proteomes" id="UP000000576">
    <property type="component" value="Chromosome"/>
</dbReference>
<dbReference type="GO" id="GO:0005737">
    <property type="term" value="C:cytoplasm"/>
    <property type="evidence" value="ECO:0007669"/>
    <property type="project" value="UniProtKB-SubCell"/>
</dbReference>
<dbReference type="GO" id="GO:0005524">
    <property type="term" value="F:ATP binding"/>
    <property type="evidence" value="ECO:0007669"/>
    <property type="project" value="UniProtKB-UniRule"/>
</dbReference>
<dbReference type="GO" id="GO:0046872">
    <property type="term" value="F:metal ion binding"/>
    <property type="evidence" value="ECO:0007669"/>
    <property type="project" value="UniProtKB-KW"/>
</dbReference>
<dbReference type="GO" id="GO:0004642">
    <property type="term" value="F:phosphoribosylformylglycinamidine synthase activity"/>
    <property type="evidence" value="ECO:0007669"/>
    <property type="project" value="UniProtKB-UniRule"/>
</dbReference>
<dbReference type="GO" id="GO:0006189">
    <property type="term" value="P:'de novo' IMP biosynthetic process"/>
    <property type="evidence" value="ECO:0007669"/>
    <property type="project" value="UniProtKB-UniRule"/>
</dbReference>
<dbReference type="CDD" id="cd01740">
    <property type="entry name" value="GATase1_FGAR_AT"/>
    <property type="match status" value="1"/>
</dbReference>
<dbReference type="CDD" id="cd02203">
    <property type="entry name" value="PurL_repeat1"/>
    <property type="match status" value="1"/>
</dbReference>
<dbReference type="CDD" id="cd02204">
    <property type="entry name" value="PurL_repeat2"/>
    <property type="match status" value="1"/>
</dbReference>
<dbReference type="FunFam" id="3.30.1330.10:FF:000005">
    <property type="entry name" value="Phosphoribosylformylglycinamidine synthase"/>
    <property type="match status" value="1"/>
</dbReference>
<dbReference type="FunFam" id="3.40.50.880:FF:000008">
    <property type="entry name" value="Phosphoribosylformylglycinamidine synthase"/>
    <property type="match status" value="1"/>
</dbReference>
<dbReference type="FunFam" id="3.90.650.10:FF:000024">
    <property type="entry name" value="Phosphoribosylformylglycinamidine synthase"/>
    <property type="match status" value="1"/>
</dbReference>
<dbReference type="FunFam" id="3.90.650.10:FF:000029">
    <property type="entry name" value="Phosphoribosylformylglycinamidine synthase"/>
    <property type="match status" value="1"/>
</dbReference>
<dbReference type="Gene3D" id="3.40.50.880">
    <property type="match status" value="1"/>
</dbReference>
<dbReference type="Gene3D" id="1.10.8.750">
    <property type="entry name" value="Phosphoribosylformylglycinamidine synthase, linker domain"/>
    <property type="match status" value="1"/>
</dbReference>
<dbReference type="Gene3D" id="3.90.650.10">
    <property type="entry name" value="PurM-like C-terminal domain"/>
    <property type="match status" value="2"/>
</dbReference>
<dbReference type="Gene3D" id="3.30.1330.10">
    <property type="entry name" value="PurM-like, N-terminal domain"/>
    <property type="match status" value="2"/>
</dbReference>
<dbReference type="HAMAP" id="MF_00419">
    <property type="entry name" value="PurL_1"/>
    <property type="match status" value="1"/>
</dbReference>
<dbReference type="InterPro" id="IPR029062">
    <property type="entry name" value="Class_I_gatase-like"/>
</dbReference>
<dbReference type="InterPro" id="IPR040707">
    <property type="entry name" value="FGAR-AT_N"/>
</dbReference>
<dbReference type="InterPro" id="IPR055181">
    <property type="entry name" value="FGAR-AT_PurM_N-like"/>
</dbReference>
<dbReference type="InterPro" id="IPR010073">
    <property type="entry name" value="PurL_large"/>
</dbReference>
<dbReference type="InterPro" id="IPR041609">
    <property type="entry name" value="PurL_linker"/>
</dbReference>
<dbReference type="InterPro" id="IPR010918">
    <property type="entry name" value="PurM-like_C_dom"/>
</dbReference>
<dbReference type="InterPro" id="IPR036676">
    <property type="entry name" value="PurM-like_C_sf"/>
</dbReference>
<dbReference type="InterPro" id="IPR036921">
    <property type="entry name" value="PurM-like_N_sf"/>
</dbReference>
<dbReference type="InterPro" id="IPR036604">
    <property type="entry name" value="PurS-like_sf"/>
</dbReference>
<dbReference type="NCBIfam" id="TIGR01735">
    <property type="entry name" value="FGAM_synt"/>
    <property type="match status" value="1"/>
</dbReference>
<dbReference type="NCBIfam" id="NF003672">
    <property type="entry name" value="PRK05297.1"/>
    <property type="match status" value="1"/>
</dbReference>
<dbReference type="PANTHER" id="PTHR10099">
    <property type="entry name" value="PHOSPHORIBOSYLFORMYLGLYCINAMIDINE SYNTHASE"/>
    <property type="match status" value="1"/>
</dbReference>
<dbReference type="PANTHER" id="PTHR10099:SF1">
    <property type="entry name" value="PHOSPHORIBOSYLFORMYLGLYCINAMIDINE SYNTHASE"/>
    <property type="match status" value="1"/>
</dbReference>
<dbReference type="Pfam" id="PF02769">
    <property type="entry name" value="AIRS_C"/>
    <property type="match status" value="2"/>
</dbReference>
<dbReference type="Pfam" id="PF18072">
    <property type="entry name" value="FGAR-AT_linker"/>
    <property type="match status" value="1"/>
</dbReference>
<dbReference type="Pfam" id="PF18076">
    <property type="entry name" value="FGAR-AT_N"/>
    <property type="match status" value="1"/>
</dbReference>
<dbReference type="Pfam" id="PF22689">
    <property type="entry name" value="FGAR-AT_PurM_N-like"/>
    <property type="match status" value="1"/>
</dbReference>
<dbReference type="Pfam" id="PF13507">
    <property type="entry name" value="GATase_5"/>
    <property type="match status" value="1"/>
</dbReference>
<dbReference type="SMART" id="SM01211">
    <property type="entry name" value="GATase_5"/>
    <property type="match status" value="1"/>
</dbReference>
<dbReference type="SUPFAM" id="SSF52317">
    <property type="entry name" value="Class I glutamine amidotransferase-like"/>
    <property type="match status" value="1"/>
</dbReference>
<dbReference type="SUPFAM" id="SSF109736">
    <property type="entry name" value="FGAM synthase PurL, linker domain"/>
    <property type="match status" value="1"/>
</dbReference>
<dbReference type="SUPFAM" id="SSF56042">
    <property type="entry name" value="PurM C-terminal domain-like"/>
    <property type="match status" value="2"/>
</dbReference>
<dbReference type="SUPFAM" id="SSF55326">
    <property type="entry name" value="PurM N-terminal domain-like"/>
    <property type="match status" value="2"/>
</dbReference>
<dbReference type="SUPFAM" id="SSF82697">
    <property type="entry name" value="PurS-like"/>
    <property type="match status" value="1"/>
</dbReference>
<dbReference type="PROSITE" id="PS51273">
    <property type="entry name" value="GATASE_TYPE_1"/>
    <property type="match status" value="1"/>
</dbReference>
<gene>
    <name evidence="1" type="primary">purL</name>
    <name type="ordered locus">XAC3549</name>
</gene>
<name>PUR4_XANAC</name>
<reference key="1">
    <citation type="journal article" date="2002" name="Nature">
        <title>Comparison of the genomes of two Xanthomonas pathogens with differing host specificities.</title>
        <authorList>
            <person name="da Silva A.C.R."/>
            <person name="Ferro J.A."/>
            <person name="Reinach F.C."/>
            <person name="Farah C.S."/>
            <person name="Furlan L.R."/>
            <person name="Quaggio R.B."/>
            <person name="Monteiro-Vitorello C.B."/>
            <person name="Van Sluys M.A."/>
            <person name="Almeida N.F. Jr."/>
            <person name="Alves L.M.C."/>
            <person name="do Amaral A.M."/>
            <person name="Bertolini M.C."/>
            <person name="Camargo L.E.A."/>
            <person name="Camarotte G."/>
            <person name="Cannavan F."/>
            <person name="Cardozo J."/>
            <person name="Chambergo F."/>
            <person name="Ciapina L.P."/>
            <person name="Cicarelli R.M.B."/>
            <person name="Coutinho L.L."/>
            <person name="Cursino-Santos J.R."/>
            <person name="El-Dorry H."/>
            <person name="Faria J.B."/>
            <person name="Ferreira A.J.S."/>
            <person name="Ferreira R.C.C."/>
            <person name="Ferro M.I.T."/>
            <person name="Formighieri E.F."/>
            <person name="Franco M.C."/>
            <person name="Greggio C.C."/>
            <person name="Gruber A."/>
            <person name="Katsuyama A.M."/>
            <person name="Kishi L.T."/>
            <person name="Leite R.P."/>
            <person name="Lemos E.G.M."/>
            <person name="Lemos M.V.F."/>
            <person name="Locali E.C."/>
            <person name="Machado M.A."/>
            <person name="Madeira A.M.B.N."/>
            <person name="Martinez-Rossi N.M."/>
            <person name="Martins E.C."/>
            <person name="Meidanis J."/>
            <person name="Menck C.F.M."/>
            <person name="Miyaki C.Y."/>
            <person name="Moon D.H."/>
            <person name="Moreira L.M."/>
            <person name="Novo M.T.M."/>
            <person name="Okura V.K."/>
            <person name="Oliveira M.C."/>
            <person name="Oliveira V.R."/>
            <person name="Pereira H.A."/>
            <person name="Rossi A."/>
            <person name="Sena J.A.D."/>
            <person name="Silva C."/>
            <person name="de Souza R.F."/>
            <person name="Spinola L.A.F."/>
            <person name="Takita M.A."/>
            <person name="Tamura R.E."/>
            <person name="Teixeira E.C."/>
            <person name="Tezza R.I.D."/>
            <person name="Trindade dos Santos M."/>
            <person name="Truffi D."/>
            <person name="Tsai S.M."/>
            <person name="White F.F."/>
            <person name="Setubal J.C."/>
            <person name="Kitajima J.P."/>
        </authorList>
    </citation>
    <scope>NUCLEOTIDE SEQUENCE [LARGE SCALE GENOMIC DNA]</scope>
    <source>
        <strain>306</strain>
    </source>
</reference>
<evidence type="ECO:0000255" key="1">
    <source>
        <dbReference type="HAMAP-Rule" id="MF_00419"/>
    </source>
</evidence>
<keyword id="KW-0067">ATP-binding</keyword>
<keyword id="KW-0963">Cytoplasm</keyword>
<keyword id="KW-0315">Glutamine amidotransferase</keyword>
<keyword id="KW-0436">Ligase</keyword>
<keyword id="KW-0460">Magnesium</keyword>
<keyword id="KW-0479">Metal-binding</keyword>
<keyword id="KW-0547">Nucleotide-binding</keyword>
<keyword id="KW-0658">Purine biosynthesis</keyword>
<comment type="function">
    <text evidence="1">Phosphoribosylformylglycinamidine synthase involved in the purines biosynthetic pathway. Catalyzes the ATP-dependent conversion of formylglycinamide ribonucleotide (FGAR) and glutamine to yield formylglycinamidine ribonucleotide (FGAM) and glutamate.</text>
</comment>
<comment type="catalytic activity">
    <reaction evidence="1">
        <text>N(2)-formyl-N(1)-(5-phospho-beta-D-ribosyl)glycinamide + L-glutamine + ATP + H2O = 2-formamido-N(1)-(5-O-phospho-beta-D-ribosyl)acetamidine + L-glutamate + ADP + phosphate + H(+)</text>
        <dbReference type="Rhea" id="RHEA:17129"/>
        <dbReference type="ChEBI" id="CHEBI:15377"/>
        <dbReference type="ChEBI" id="CHEBI:15378"/>
        <dbReference type="ChEBI" id="CHEBI:29985"/>
        <dbReference type="ChEBI" id="CHEBI:30616"/>
        <dbReference type="ChEBI" id="CHEBI:43474"/>
        <dbReference type="ChEBI" id="CHEBI:58359"/>
        <dbReference type="ChEBI" id="CHEBI:147286"/>
        <dbReference type="ChEBI" id="CHEBI:147287"/>
        <dbReference type="ChEBI" id="CHEBI:456216"/>
        <dbReference type="EC" id="6.3.5.3"/>
    </reaction>
</comment>
<comment type="pathway">
    <text evidence="1">Purine metabolism; IMP biosynthesis via de novo pathway; 5-amino-1-(5-phospho-D-ribosyl)imidazole from N(2)-formyl-N(1)-(5-phospho-D-ribosyl)glycinamide: step 1/2.</text>
</comment>
<comment type="subunit">
    <text evidence="1">Monomer.</text>
</comment>
<comment type="subcellular location">
    <subcellularLocation>
        <location evidence="1">Cytoplasm</location>
    </subcellularLocation>
</comment>
<comment type="similarity">
    <text evidence="1">In the N-terminal section; belongs to the FGAMS family.</text>
</comment>
<sequence>MMVLEGASALSPFRRARLETRLQTLVPALRITGAWHVYFIRPEAGQSPDQATLQRILQANAAPAERDADASSRYVVPRLGTLSPWSSKATELVRGAGQPIQRVERGTRIDLAGWPDDASAQAAVAKLLHDPMTQSLLGSAAAAEALFNVPDPGQLRRVPLDGLEQANRDLGLALAQDEIDYLRERFGALGRDPADVELMMFAQANSEHCRHKIFNATWTIDGKPQERSLFRMIKHTHQQTPQHTLSAYSDNAAVVEGVPAARYRPDPATGQYRSEAVLPSAFAIKVETHNHPTAIAPFPGAATGAGGEIRDEGATGRGGKPKAGLTGFSVSHLRIPTLPQPWEAPRALNPRMAPALDIMLDGPLGGAAFNNEFGRPNLLGYFRSFELAEGPGLTRAYDKPIMLAGGLGAIDRNQVEKLRLQPGDAVIVLGGPAMLIGLGGGAASSVAAGDSAEALDFASVQRENPEMERRCQEVIDRCVALGVDNPIRWFHDVGAGGLSNAIPELLHDSGVGGIIDLGRVLTDDPSLSPLELWCNESQERYVLGVPQARLEEFAAICARERCPFAAVGVATAEERLVVGYGVLDAGNRESGVGNRNGTLVAADTASHHSPFPTRDSQLPIDLPMDVLFGKAPKMHRDAAHPGAPQWPVLQTASLDLQQAGLRVLAHPTVASKSFLVTIGDRSVGGLTAREQMIGPWQLPLADCAITLAGFDTFEGEAMSIGERTPLALLNAAASARMAVGEAITNLCAAPVQTLDSIKLSANWMAAAGHSGEDALLYDAVRAIGMELCPALELSVPVGKDSLSMQAQWQVGNRESGIGNGETPQPSASTIPDSPFPIPGETLKSVSPVSLIISAFAPVGDVRTQLTPLLRSGEESELWLIGLGGGKQRLGGSVLAQVYADDTALPAFGGEVPDLDDAQRLRSFFELIRDARDSGLLLAYHDRSDGGAFAALCEMAFASRQGLDITLDAWGDDAFRSLFNEELGAVVQIASEDRAAFADLVERHALTECAQRIARPTGTPRIRVSGQGRVLAEWRWEELFDAWWSVTHAMQKLRDNPDSADEERALARDFKASGLRPKLVFDPSDDVAAPFVATGTRPKVAILREQGVNGQIEMAYNFERAGFRPYDVHMSDLIEGRVDLSAFVGFAACGGFSYGDVLGAGRGWATSILERSALRDAFAAFFARSDTFALGVCNGCQMLSQLKDIIPGAEHWPRFLRNRSEQFEARTALLEVVESPSIFLRGMAGSRIPVAVAHGEGRAEFDSAVDQAAARVALRYIDGDGAVASQYPLNPNGSPDGITGLTSSDGRVTILMPHPERTPRSANLSWYPVDWGDDSPWLRMFRNARVWCG</sequence>
<feature type="chain" id="PRO_0000100424" description="Phosphoribosylformylglycinamidine synthase">
    <location>
        <begin position="1"/>
        <end position="1348"/>
    </location>
</feature>
<feature type="domain" description="Glutamine amidotransferase type-1" evidence="1">
    <location>
        <begin position="1099"/>
        <end position="1348"/>
    </location>
</feature>
<feature type="active site" description="Nucleophile" evidence="1">
    <location>
        <position position="1192"/>
    </location>
</feature>
<feature type="active site" evidence="1">
    <location>
        <position position="1313"/>
    </location>
</feature>
<feature type="active site" evidence="1">
    <location>
        <position position="1315"/>
    </location>
</feature>
<feature type="binding site" evidence="1">
    <location>
        <begin position="300"/>
        <end position="311"/>
    </location>
    <ligand>
        <name>ATP</name>
        <dbReference type="ChEBI" id="CHEBI:30616"/>
    </ligand>
</feature>
<feature type="binding site" evidence="1">
    <location>
        <position position="701"/>
    </location>
    <ligand>
        <name>ATP</name>
        <dbReference type="ChEBI" id="CHEBI:30616"/>
    </ligand>
</feature>
<feature type="binding site" evidence="1">
    <location>
        <position position="702"/>
    </location>
    <ligand>
        <name>Mg(2+)</name>
        <dbReference type="ChEBI" id="CHEBI:18420"/>
    </ligand>
</feature>
<feature type="binding site" evidence="1">
    <location>
        <position position="741"/>
    </location>
    <ligand>
        <name>Mg(2+)</name>
        <dbReference type="ChEBI" id="CHEBI:18420"/>
    </ligand>
</feature>
<feature type="binding site" evidence="1">
    <location>
        <position position="745"/>
    </location>
    <ligand>
        <name>Mg(2+)</name>
        <dbReference type="ChEBI" id="CHEBI:18420"/>
    </ligand>
</feature>
<feature type="binding site" evidence="1">
    <location>
        <position position="941"/>
    </location>
    <ligand>
        <name>Mg(2+)</name>
        <dbReference type="ChEBI" id="CHEBI:18420"/>
    </ligand>
</feature>
<feature type="binding site" evidence="1">
    <location>
        <position position="943"/>
    </location>
    <ligand>
        <name>ATP</name>
        <dbReference type="ChEBI" id="CHEBI:30616"/>
    </ligand>
</feature>
<accession>Q8PGR7</accession>
<organism>
    <name type="scientific">Xanthomonas axonopodis pv. citri (strain 306)</name>
    <dbReference type="NCBI Taxonomy" id="190486"/>
    <lineage>
        <taxon>Bacteria</taxon>
        <taxon>Pseudomonadati</taxon>
        <taxon>Pseudomonadota</taxon>
        <taxon>Gammaproteobacteria</taxon>
        <taxon>Lysobacterales</taxon>
        <taxon>Lysobacteraceae</taxon>
        <taxon>Xanthomonas</taxon>
    </lineage>
</organism>
<protein>
    <recommendedName>
        <fullName evidence="1">Phosphoribosylformylglycinamidine synthase</fullName>
        <shortName evidence="1">FGAM synthase</shortName>
        <shortName evidence="1">FGAMS</shortName>
        <ecNumber evidence="1">6.3.5.3</ecNumber>
    </recommendedName>
    <alternativeName>
        <fullName evidence="1">Formylglycinamide ribonucleotide amidotransferase</fullName>
        <shortName evidence="1">FGAR amidotransferase</shortName>
        <shortName evidence="1">FGAR-AT</shortName>
    </alternativeName>
</protein>
<proteinExistence type="inferred from homology"/>